<accession>Q5VU92</accession>
<accession>Q8IYK3</accession>
<name>DC121_HUMAN</name>
<reference key="1">
    <citation type="journal article" date="2005" name="Nature">
        <title>The DNA sequence of the human X chromosome.</title>
        <authorList>
            <person name="Ross M.T."/>
            <person name="Grafham D.V."/>
            <person name="Coffey A.J."/>
            <person name="Scherer S."/>
            <person name="McLay K."/>
            <person name="Muzny D."/>
            <person name="Platzer M."/>
            <person name="Howell G.R."/>
            <person name="Burrows C."/>
            <person name="Bird C.P."/>
            <person name="Frankish A."/>
            <person name="Lovell F.L."/>
            <person name="Howe K.L."/>
            <person name="Ashurst J.L."/>
            <person name="Fulton R.S."/>
            <person name="Sudbrak R."/>
            <person name="Wen G."/>
            <person name="Jones M.C."/>
            <person name="Hurles M.E."/>
            <person name="Andrews T.D."/>
            <person name="Scott C.E."/>
            <person name="Searle S."/>
            <person name="Ramser J."/>
            <person name="Whittaker A."/>
            <person name="Deadman R."/>
            <person name="Carter N.P."/>
            <person name="Hunt S.E."/>
            <person name="Chen R."/>
            <person name="Cree A."/>
            <person name="Gunaratne P."/>
            <person name="Havlak P."/>
            <person name="Hodgson A."/>
            <person name="Metzker M.L."/>
            <person name="Richards S."/>
            <person name="Scott G."/>
            <person name="Steffen D."/>
            <person name="Sodergren E."/>
            <person name="Wheeler D.A."/>
            <person name="Worley K.C."/>
            <person name="Ainscough R."/>
            <person name="Ambrose K.D."/>
            <person name="Ansari-Lari M.A."/>
            <person name="Aradhya S."/>
            <person name="Ashwell R.I."/>
            <person name="Babbage A.K."/>
            <person name="Bagguley C.L."/>
            <person name="Ballabio A."/>
            <person name="Banerjee R."/>
            <person name="Barker G.E."/>
            <person name="Barlow K.F."/>
            <person name="Barrett I.P."/>
            <person name="Bates K.N."/>
            <person name="Beare D.M."/>
            <person name="Beasley H."/>
            <person name="Beasley O."/>
            <person name="Beck A."/>
            <person name="Bethel G."/>
            <person name="Blechschmidt K."/>
            <person name="Brady N."/>
            <person name="Bray-Allen S."/>
            <person name="Bridgeman A.M."/>
            <person name="Brown A.J."/>
            <person name="Brown M.J."/>
            <person name="Bonnin D."/>
            <person name="Bruford E.A."/>
            <person name="Buhay C."/>
            <person name="Burch P."/>
            <person name="Burford D."/>
            <person name="Burgess J."/>
            <person name="Burrill W."/>
            <person name="Burton J."/>
            <person name="Bye J.M."/>
            <person name="Carder C."/>
            <person name="Carrel L."/>
            <person name="Chako J."/>
            <person name="Chapman J.C."/>
            <person name="Chavez D."/>
            <person name="Chen E."/>
            <person name="Chen G."/>
            <person name="Chen Y."/>
            <person name="Chen Z."/>
            <person name="Chinault C."/>
            <person name="Ciccodicola A."/>
            <person name="Clark S.Y."/>
            <person name="Clarke G."/>
            <person name="Clee C.M."/>
            <person name="Clegg S."/>
            <person name="Clerc-Blankenburg K."/>
            <person name="Clifford K."/>
            <person name="Cobley V."/>
            <person name="Cole C.G."/>
            <person name="Conquer J.S."/>
            <person name="Corby N."/>
            <person name="Connor R.E."/>
            <person name="David R."/>
            <person name="Davies J."/>
            <person name="Davis C."/>
            <person name="Davis J."/>
            <person name="Delgado O."/>
            <person name="Deshazo D."/>
            <person name="Dhami P."/>
            <person name="Ding Y."/>
            <person name="Dinh H."/>
            <person name="Dodsworth S."/>
            <person name="Draper H."/>
            <person name="Dugan-Rocha S."/>
            <person name="Dunham A."/>
            <person name="Dunn M."/>
            <person name="Durbin K.J."/>
            <person name="Dutta I."/>
            <person name="Eades T."/>
            <person name="Ellwood M."/>
            <person name="Emery-Cohen A."/>
            <person name="Errington H."/>
            <person name="Evans K.L."/>
            <person name="Faulkner L."/>
            <person name="Francis F."/>
            <person name="Frankland J."/>
            <person name="Fraser A.E."/>
            <person name="Galgoczy P."/>
            <person name="Gilbert J."/>
            <person name="Gill R."/>
            <person name="Gloeckner G."/>
            <person name="Gregory S.G."/>
            <person name="Gribble S."/>
            <person name="Griffiths C."/>
            <person name="Grocock R."/>
            <person name="Gu Y."/>
            <person name="Gwilliam R."/>
            <person name="Hamilton C."/>
            <person name="Hart E.A."/>
            <person name="Hawes A."/>
            <person name="Heath P.D."/>
            <person name="Heitmann K."/>
            <person name="Hennig S."/>
            <person name="Hernandez J."/>
            <person name="Hinzmann B."/>
            <person name="Ho S."/>
            <person name="Hoffs M."/>
            <person name="Howden P.J."/>
            <person name="Huckle E.J."/>
            <person name="Hume J."/>
            <person name="Hunt P.J."/>
            <person name="Hunt A.R."/>
            <person name="Isherwood J."/>
            <person name="Jacob L."/>
            <person name="Johnson D."/>
            <person name="Jones S."/>
            <person name="de Jong P.J."/>
            <person name="Joseph S.S."/>
            <person name="Keenan S."/>
            <person name="Kelly S."/>
            <person name="Kershaw J.K."/>
            <person name="Khan Z."/>
            <person name="Kioschis P."/>
            <person name="Klages S."/>
            <person name="Knights A.J."/>
            <person name="Kosiura A."/>
            <person name="Kovar-Smith C."/>
            <person name="Laird G.K."/>
            <person name="Langford C."/>
            <person name="Lawlor S."/>
            <person name="Leversha M."/>
            <person name="Lewis L."/>
            <person name="Liu W."/>
            <person name="Lloyd C."/>
            <person name="Lloyd D.M."/>
            <person name="Loulseged H."/>
            <person name="Loveland J.E."/>
            <person name="Lovell J.D."/>
            <person name="Lozado R."/>
            <person name="Lu J."/>
            <person name="Lyne R."/>
            <person name="Ma J."/>
            <person name="Maheshwari M."/>
            <person name="Matthews L.H."/>
            <person name="McDowall J."/>
            <person name="McLaren S."/>
            <person name="McMurray A."/>
            <person name="Meidl P."/>
            <person name="Meitinger T."/>
            <person name="Milne S."/>
            <person name="Miner G."/>
            <person name="Mistry S.L."/>
            <person name="Morgan M."/>
            <person name="Morris S."/>
            <person name="Mueller I."/>
            <person name="Mullikin J.C."/>
            <person name="Nguyen N."/>
            <person name="Nordsiek G."/>
            <person name="Nyakatura G."/>
            <person name="O'dell C.N."/>
            <person name="Okwuonu G."/>
            <person name="Palmer S."/>
            <person name="Pandian R."/>
            <person name="Parker D."/>
            <person name="Parrish J."/>
            <person name="Pasternak S."/>
            <person name="Patel D."/>
            <person name="Pearce A.V."/>
            <person name="Pearson D.M."/>
            <person name="Pelan S.E."/>
            <person name="Perez L."/>
            <person name="Porter K.M."/>
            <person name="Ramsey Y."/>
            <person name="Reichwald K."/>
            <person name="Rhodes S."/>
            <person name="Ridler K.A."/>
            <person name="Schlessinger D."/>
            <person name="Schueler M.G."/>
            <person name="Sehra H.K."/>
            <person name="Shaw-Smith C."/>
            <person name="Shen H."/>
            <person name="Sheridan E.M."/>
            <person name="Shownkeen R."/>
            <person name="Skuce C.D."/>
            <person name="Smith M.L."/>
            <person name="Sotheran E.C."/>
            <person name="Steingruber H.E."/>
            <person name="Steward C.A."/>
            <person name="Storey R."/>
            <person name="Swann R.M."/>
            <person name="Swarbreck D."/>
            <person name="Tabor P.E."/>
            <person name="Taudien S."/>
            <person name="Taylor T."/>
            <person name="Teague B."/>
            <person name="Thomas K."/>
            <person name="Thorpe A."/>
            <person name="Timms K."/>
            <person name="Tracey A."/>
            <person name="Trevanion S."/>
            <person name="Tromans A.C."/>
            <person name="d'Urso M."/>
            <person name="Verduzco D."/>
            <person name="Villasana D."/>
            <person name="Waldron L."/>
            <person name="Wall M."/>
            <person name="Wang Q."/>
            <person name="Warren J."/>
            <person name="Warry G.L."/>
            <person name="Wei X."/>
            <person name="West A."/>
            <person name="Whitehead S.L."/>
            <person name="Whiteley M.N."/>
            <person name="Wilkinson J.E."/>
            <person name="Willey D.L."/>
            <person name="Williams G."/>
            <person name="Williams L."/>
            <person name="Williamson A."/>
            <person name="Williamson H."/>
            <person name="Wilming L."/>
            <person name="Woodmansey R.L."/>
            <person name="Wray P.W."/>
            <person name="Yen J."/>
            <person name="Zhang J."/>
            <person name="Zhou J."/>
            <person name="Zoghbi H."/>
            <person name="Zorilla S."/>
            <person name="Buck D."/>
            <person name="Reinhardt R."/>
            <person name="Poustka A."/>
            <person name="Rosenthal A."/>
            <person name="Lehrach H."/>
            <person name="Meindl A."/>
            <person name="Minx P.J."/>
            <person name="Hillier L.W."/>
            <person name="Willard H.F."/>
            <person name="Wilson R.K."/>
            <person name="Waterston R.H."/>
            <person name="Rice C.M."/>
            <person name="Vaudin M."/>
            <person name="Coulson A."/>
            <person name="Nelson D.L."/>
            <person name="Weinstock G."/>
            <person name="Sulston J.E."/>
            <person name="Durbin R.M."/>
            <person name="Hubbard T."/>
            <person name="Gibbs R.A."/>
            <person name="Beck S."/>
            <person name="Rogers J."/>
            <person name="Bentley D.R."/>
        </authorList>
    </citation>
    <scope>NUCLEOTIDE SEQUENCE [LARGE SCALE GENOMIC DNA]</scope>
</reference>
<reference key="2">
    <citation type="submission" date="2005-09" db="EMBL/GenBank/DDBJ databases">
        <authorList>
            <person name="Mural R.J."/>
            <person name="Istrail S."/>
            <person name="Sutton G.G."/>
            <person name="Florea L."/>
            <person name="Halpern A.L."/>
            <person name="Mobarry C.M."/>
            <person name="Lippert R."/>
            <person name="Walenz B."/>
            <person name="Shatkay H."/>
            <person name="Dew I."/>
            <person name="Miller J.R."/>
            <person name="Flanigan M.J."/>
            <person name="Edwards N.J."/>
            <person name="Bolanos R."/>
            <person name="Fasulo D."/>
            <person name="Halldorsson B.V."/>
            <person name="Hannenhalli S."/>
            <person name="Turner R."/>
            <person name="Yooseph S."/>
            <person name="Lu F."/>
            <person name="Nusskern D.R."/>
            <person name="Shue B.C."/>
            <person name="Zheng X.H."/>
            <person name="Zhong F."/>
            <person name="Delcher A.L."/>
            <person name="Huson D.H."/>
            <person name="Kravitz S.A."/>
            <person name="Mouchard L."/>
            <person name="Reinert K."/>
            <person name="Remington K.A."/>
            <person name="Clark A.G."/>
            <person name="Waterman M.S."/>
            <person name="Eichler E.E."/>
            <person name="Adams M.D."/>
            <person name="Hunkapiller M.W."/>
            <person name="Myers E.W."/>
            <person name="Venter J.C."/>
        </authorList>
    </citation>
    <scope>NUCLEOTIDE SEQUENCE [LARGE SCALE GENOMIC DNA]</scope>
</reference>
<reference key="3">
    <citation type="journal article" date="2004" name="Genome Res.">
        <title>The status, quality, and expansion of the NIH full-length cDNA project: the Mammalian Gene Collection (MGC).</title>
        <authorList>
            <consortium name="The MGC Project Team"/>
        </authorList>
    </citation>
    <scope>NUCLEOTIDE SEQUENCE [LARGE SCALE MRNA]</scope>
    <scope>VARIANT GLY-19</scope>
    <source>
        <tissue>Brain</tissue>
    </source>
</reference>
<dbReference type="EMBL" id="AL590425">
    <property type="status" value="NOT_ANNOTATED_CDS"/>
    <property type="molecule type" value="Genomic_DNA"/>
</dbReference>
<dbReference type="EMBL" id="CH471107">
    <property type="protein sequence ID" value="EAX11841.1"/>
    <property type="molecule type" value="Genomic_DNA"/>
</dbReference>
<dbReference type="EMBL" id="BC035674">
    <property type="protein sequence ID" value="AAH35674.1"/>
    <property type="molecule type" value="mRNA"/>
</dbReference>
<dbReference type="CCDS" id="CCDS14610.1"/>
<dbReference type="RefSeq" id="NP_848565.2">
    <property type="nucleotide sequence ID" value="NM_178470.5"/>
</dbReference>
<dbReference type="SMR" id="Q5VU92"/>
<dbReference type="BioGRID" id="126547">
    <property type="interactions" value="2"/>
</dbReference>
<dbReference type="FunCoup" id="Q5VU92">
    <property type="interactions" value="8"/>
</dbReference>
<dbReference type="IntAct" id="Q5VU92">
    <property type="interactions" value="2"/>
</dbReference>
<dbReference type="STRING" id="9606.ENSP00000360167"/>
<dbReference type="iPTMnet" id="Q5VU92"/>
<dbReference type="PhosphoSitePlus" id="Q5VU92"/>
<dbReference type="BioMuta" id="DCAF12L1"/>
<dbReference type="DMDM" id="74762259"/>
<dbReference type="MassIVE" id="Q5VU92"/>
<dbReference type="PaxDb" id="9606-ENSP00000360167"/>
<dbReference type="PeptideAtlas" id="Q5VU92"/>
<dbReference type="ProteomicsDB" id="65400"/>
<dbReference type="Pumba" id="Q5VU92"/>
<dbReference type="Antibodypedia" id="66279">
    <property type="antibodies" value="4 antibodies from 4 providers"/>
</dbReference>
<dbReference type="DNASU" id="139170"/>
<dbReference type="Ensembl" id="ENST00000371126.3">
    <property type="protein sequence ID" value="ENSP00000360167.1"/>
    <property type="gene ID" value="ENSG00000198889.5"/>
</dbReference>
<dbReference type="GeneID" id="139170"/>
<dbReference type="KEGG" id="hsa:139170"/>
<dbReference type="MANE-Select" id="ENST00000371126.3">
    <property type="protein sequence ID" value="ENSP00000360167.1"/>
    <property type="RefSeq nucleotide sequence ID" value="NM_178470.5"/>
    <property type="RefSeq protein sequence ID" value="NP_848565.2"/>
</dbReference>
<dbReference type="UCSC" id="uc004eul.4">
    <property type="organism name" value="human"/>
</dbReference>
<dbReference type="AGR" id="HGNC:29395"/>
<dbReference type="CTD" id="139170"/>
<dbReference type="DisGeNET" id="139170"/>
<dbReference type="GeneCards" id="DCAF12L1"/>
<dbReference type="HGNC" id="HGNC:29395">
    <property type="gene designation" value="DCAF12L1"/>
</dbReference>
<dbReference type="HPA" id="ENSG00000198889">
    <property type="expression patterns" value="Tissue enhanced (epididymis, testis)"/>
</dbReference>
<dbReference type="neXtProt" id="NX_Q5VU92"/>
<dbReference type="OpenTargets" id="ENSG00000198889"/>
<dbReference type="PharmGKB" id="PA165756488"/>
<dbReference type="VEuPathDB" id="HostDB:ENSG00000198889"/>
<dbReference type="eggNOG" id="ENOG502QR7U">
    <property type="taxonomic scope" value="Eukaryota"/>
</dbReference>
<dbReference type="GeneTree" id="ENSGT00940000165384"/>
<dbReference type="HOGENOM" id="CLU_020124_1_0_1"/>
<dbReference type="InParanoid" id="Q5VU92"/>
<dbReference type="OMA" id="VQSGHIA"/>
<dbReference type="OrthoDB" id="9610195at2759"/>
<dbReference type="PAN-GO" id="Q5VU92">
    <property type="GO annotations" value="1 GO annotation based on evolutionary models"/>
</dbReference>
<dbReference type="PhylomeDB" id="Q5VU92"/>
<dbReference type="TreeFam" id="TF323731"/>
<dbReference type="PathwayCommons" id="Q5VU92"/>
<dbReference type="SignaLink" id="Q5VU92"/>
<dbReference type="BioGRID-ORCS" id="139170">
    <property type="hits" value="6 hits in 767 CRISPR screens"/>
</dbReference>
<dbReference type="GenomeRNAi" id="139170"/>
<dbReference type="Pharos" id="Q5VU92">
    <property type="development level" value="Tdark"/>
</dbReference>
<dbReference type="PRO" id="PR:Q5VU92"/>
<dbReference type="Proteomes" id="UP000005640">
    <property type="component" value="Chromosome X"/>
</dbReference>
<dbReference type="RNAct" id="Q5VU92">
    <property type="molecule type" value="protein"/>
</dbReference>
<dbReference type="Bgee" id="ENSG00000198889">
    <property type="expression patterns" value="Expressed in primordial germ cell in gonad and 55 other cell types or tissues"/>
</dbReference>
<dbReference type="GO" id="GO:0080008">
    <property type="term" value="C:Cul4-RING E3 ubiquitin ligase complex"/>
    <property type="evidence" value="ECO:0000318"/>
    <property type="project" value="GO_Central"/>
</dbReference>
<dbReference type="FunFam" id="2.130.10.10:FF:000497">
    <property type="entry name" value="DDB1 and CUL4-associated factor 12-like 1"/>
    <property type="match status" value="1"/>
</dbReference>
<dbReference type="FunFam" id="2.130.10.10:FF:000486">
    <property type="entry name" value="DDB1- and CUL4-associated factor 12-like protein 2"/>
    <property type="match status" value="1"/>
</dbReference>
<dbReference type="Gene3D" id="2.130.10.10">
    <property type="entry name" value="YVTN repeat-like/Quinoprotein amine dehydrogenase"/>
    <property type="match status" value="2"/>
</dbReference>
<dbReference type="InterPro" id="IPR056151">
    <property type="entry name" value="Beta-prop_DCAF12"/>
</dbReference>
<dbReference type="InterPro" id="IPR051191">
    <property type="entry name" value="DCAF12"/>
</dbReference>
<dbReference type="InterPro" id="IPR015943">
    <property type="entry name" value="WD40/YVTN_repeat-like_dom_sf"/>
</dbReference>
<dbReference type="InterPro" id="IPR036322">
    <property type="entry name" value="WD40_repeat_dom_sf"/>
</dbReference>
<dbReference type="InterPro" id="IPR001680">
    <property type="entry name" value="WD40_rpt"/>
</dbReference>
<dbReference type="PANTHER" id="PTHR19860:SF35">
    <property type="entry name" value="DDB1- AND CUL4-ASSOCIATED FACTOR 12-LIKE PROTEIN 1"/>
    <property type="match status" value="1"/>
</dbReference>
<dbReference type="PANTHER" id="PTHR19860">
    <property type="entry name" value="DDB1- AND CUL4-ASSOCIATED FACTOR 12-RELATED"/>
    <property type="match status" value="1"/>
</dbReference>
<dbReference type="Pfam" id="PF23760">
    <property type="entry name" value="Beta-prop_DCAF12"/>
    <property type="match status" value="1"/>
</dbReference>
<dbReference type="SMART" id="SM00320">
    <property type="entry name" value="WD40"/>
    <property type="match status" value="3"/>
</dbReference>
<dbReference type="SUPFAM" id="SSF50978">
    <property type="entry name" value="WD40 repeat-like"/>
    <property type="match status" value="1"/>
</dbReference>
<dbReference type="PROSITE" id="PS50082">
    <property type="entry name" value="WD_REPEATS_2"/>
    <property type="match status" value="1"/>
</dbReference>
<dbReference type="PROSITE" id="PS50294">
    <property type="entry name" value="WD_REPEATS_REGION"/>
    <property type="match status" value="1"/>
</dbReference>
<comment type="interaction">
    <interactant intactId="EBI-10694873">
        <id>Q5VU92</id>
    </interactant>
    <interactant intactId="EBI-490630">
        <id>Q9NP31</id>
        <label>SH2D2A</label>
    </interactant>
    <organismsDiffer>false</organismsDiffer>
    <experiments>3</experiments>
</comment>
<comment type="similarity">
    <text evidence="3">Belongs to the WD repeat DCAF12 family.</text>
</comment>
<gene>
    <name type="primary">DCAF12L1</name>
    <name type="synonym">WDR40B</name>
</gene>
<keyword id="KW-1267">Proteomics identification</keyword>
<keyword id="KW-1185">Reference proteome</keyword>
<keyword id="KW-0677">Repeat</keyword>
<keyword id="KW-0853">WD repeat</keyword>
<proteinExistence type="evidence at protein level"/>
<protein>
    <recommendedName>
        <fullName>DDB1- and CUL4-associated factor 12-like protein 1</fullName>
    </recommendedName>
    <alternativeName>
        <fullName>WD repeat-containing protein 40B</fullName>
    </alternativeName>
</protein>
<organism>
    <name type="scientific">Homo sapiens</name>
    <name type="common">Human</name>
    <dbReference type="NCBI Taxonomy" id="9606"/>
    <lineage>
        <taxon>Eukaryota</taxon>
        <taxon>Metazoa</taxon>
        <taxon>Chordata</taxon>
        <taxon>Craniata</taxon>
        <taxon>Vertebrata</taxon>
        <taxon>Euteleostomi</taxon>
        <taxon>Mammalia</taxon>
        <taxon>Eutheria</taxon>
        <taxon>Euarchontoglires</taxon>
        <taxon>Primates</taxon>
        <taxon>Haplorrhini</taxon>
        <taxon>Catarrhini</taxon>
        <taxon>Hominidae</taxon>
        <taxon>Homo</taxon>
    </lineage>
</organism>
<evidence type="ECO:0000256" key="1">
    <source>
        <dbReference type="SAM" id="MobiDB-lite"/>
    </source>
</evidence>
<evidence type="ECO:0000269" key="2">
    <source>
    </source>
</evidence>
<evidence type="ECO:0000305" key="3"/>
<sequence>MAQQQTGSRKRKAPAVEADAESSPSQGLAAADGEGPLLLKRQRRPATYRSMAHYLKVREVGGWGPARLQGFDGELRGYAVQRLPELLTERQLELGTVNKVFASQWLNSRQVVCGTKCNTLFVVDVESGHIARIPLLRDSEARLAQDQQGCGIHAIELNPSKTLLATGGENPNSLAIYQLPSLDPLCLGDRHGHKDWIFAVAWLSDTVAVSGSRDGTVALWRMDPDKFDDTVAWHSEVGLPVYAHIRPRDVEAIPRAIINPSNRKVRALACGGKNQELGAVSLDGYFHLWKAGSALSRLLSIRLPYFRDNVCLTYCDDMSVYAVGSHSHVSFLDLRQDQQNIRPLCSREGGTGVRSLSFYRHIITVGTGQGSLLFYDVRAQKFLEERASATLESSSGPARRKLRLACGRGWLNHNDFWVNYFGGMEVFPNALYTHCYNWPEMKLFVAGGPLPAGLHGNYAGLWS</sequence>
<feature type="chain" id="PRO_0000306848" description="DDB1- and CUL4-associated factor 12-like protein 1">
    <location>
        <begin position="1"/>
        <end position="463"/>
    </location>
</feature>
<feature type="repeat" description="WD 1">
    <location>
        <begin position="87"/>
        <end position="137"/>
    </location>
</feature>
<feature type="repeat" description="WD 2">
    <location>
        <begin position="138"/>
        <end position="184"/>
    </location>
</feature>
<feature type="repeat" description="WD 3">
    <location>
        <begin position="185"/>
        <end position="252"/>
    </location>
</feature>
<feature type="repeat" description="WD 4">
    <location>
        <begin position="253"/>
        <end position="297"/>
    </location>
</feature>
<feature type="repeat" description="WD 5">
    <location>
        <begin position="298"/>
        <end position="341"/>
    </location>
</feature>
<feature type="repeat" description="WD 6">
    <location>
        <begin position="342"/>
        <end position="376"/>
    </location>
</feature>
<feature type="region of interest" description="Disordered" evidence="1">
    <location>
        <begin position="1"/>
        <end position="35"/>
    </location>
</feature>
<feature type="sequence variant" id="VAR_035323" description="In dbSNP:rs11095722." evidence="2">
    <original>D</original>
    <variation>G</variation>
    <location>
        <position position="19"/>
    </location>
</feature>